<comment type="function">
    <text evidence="1">Cell wall formation. Catalyzes the transfer of a GlcNAc subunit on undecaprenyl-pyrophosphoryl-MurNAc-pentapeptide (lipid intermediate I) to form undecaprenyl-pyrophosphoryl-MurNAc-(pentapeptide)GlcNAc (lipid intermediate II).</text>
</comment>
<comment type="catalytic activity">
    <reaction evidence="1">
        <text>di-trans,octa-cis-undecaprenyl diphospho-N-acetyl-alpha-D-muramoyl-L-alanyl-D-glutamyl-meso-2,6-diaminopimeloyl-D-alanyl-D-alanine + UDP-N-acetyl-alpha-D-glucosamine = di-trans,octa-cis-undecaprenyl diphospho-[N-acetyl-alpha-D-glucosaminyl-(1-&gt;4)]-N-acetyl-alpha-D-muramoyl-L-alanyl-D-glutamyl-meso-2,6-diaminopimeloyl-D-alanyl-D-alanine + UDP + H(+)</text>
        <dbReference type="Rhea" id="RHEA:31227"/>
        <dbReference type="ChEBI" id="CHEBI:15378"/>
        <dbReference type="ChEBI" id="CHEBI:57705"/>
        <dbReference type="ChEBI" id="CHEBI:58223"/>
        <dbReference type="ChEBI" id="CHEBI:61387"/>
        <dbReference type="ChEBI" id="CHEBI:61388"/>
        <dbReference type="EC" id="2.4.1.227"/>
    </reaction>
</comment>
<comment type="pathway">
    <text evidence="1">Cell wall biogenesis; peptidoglycan biosynthesis.</text>
</comment>
<comment type="subcellular location">
    <subcellularLocation>
        <location evidence="1">Cell inner membrane</location>
        <topology evidence="1">Peripheral membrane protein</topology>
        <orientation evidence="1">Cytoplasmic side</orientation>
    </subcellularLocation>
</comment>
<comment type="similarity">
    <text evidence="1">Belongs to the glycosyltransferase 28 family. MurG subfamily.</text>
</comment>
<dbReference type="EC" id="2.4.1.227" evidence="1"/>
<dbReference type="EMBL" id="CP001063">
    <property type="protein sequence ID" value="ACD10051.1"/>
    <property type="molecule type" value="Genomic_DNA"/>
</dbReference>
<dbReference type="RefSeq" id="WP_000016552.1">
    <property type="nucleotide sequence ID" value="NC_010658.1"/>
</dbReference>
<dbReference type="SMR" id="B2U295"/>
<dbReference type="STRING" id="344609.SbBS512_E0083"/>
<dbReference type="CAZy" id="GT28">
    <property type="family name" value="Glycosyltransferase Family 28"/>
</dbReference>
<dbReference type="KEGG" id="sbc:SbBS512_E0083"/>
<dbReference type="HOGENOM" id="CLU_037404_2_0_6"/>
<dbReference type="UniPathway" id="UPA00219"/>
<dbReference type="Proteomes" id="UP000001030">
    <property type="component" value="Chromosome"/>
</dbReference>
<dbReference type="GO" id="GO:0005886">
    <property type="term" value="C:plasma membrane"/>
    <property type="evidence" value="ECO:0007669"/>
    <property type="project" value="UniProtKB-SubCell"/>
</dbReference>
<dbReference type="GO" id="GO:0051991">
    <property type="term" value="F:UDP-N-acetyl-D-glucosamine:N-acetylmuramoyl-L-alanyl-D-glutamyl-meso-2,6-diaminopimelyl-D-alanyl-D-alanine-diphosphoundecaprenol 4-beta-N-acetylglucosaminlytransferase activity"/>
    <property type="evidence" value="ECO:0007669"/>
    <property type="project" value="RHEA"/>
</dbReference>
<dbReference type="GO" id="GO:0050511">
    <property type="term" value="F:undecaprenyldiphospho-muramoylpentapeptide beta-N-acetylglucosaminyltransferase activity"/>
    <property type="evidence" value="ECO:0007669"/>
    <property type="project" value="UniProtKB-UniRule"/>
</dbReference>
<dbReference type="GO" id="GO:0005975">
    <property type="term" value="P:carbohydrate metabolic process"/>
    <property type="evidence" value="ECO:0007669"/>
    <property type="project" value="InterPro"/>
</dbReference>
<dbReference type="GO" id="GO:0051301">
    <property type="term" value="P:cell division"/>
    <property type="evidence" value="ECO:0007669"/>
    <property type="project" value="UniProtKB-KW"/>
</dbReference>
<dbReference type="GO" id="GO:0071555">
    <property type="term" value="P:cell wall organization"/>
    <property type="evidence" value="ECO:0007669"/>
    <property type="project" value="UniProtKB-KW"/>
</dbReference>
<dbReference type="GO" id="GO:0030259">
    <property type="term" value="P:lipid glycosylation"/>
    <property type="evidence" value="ECO:0007669"/>
    <property type="project" value="UniProtKB-UniRule"/>
</dbReference>
<dbReference type="GO" id="GO:0009252">
    <property type="term" value="P:peptidoglycan biosynthetic process"/>
    <property type="evidence" value="ECO:0007669"/>
    <property type="project" value="UniProtKB-UniRule"/>
</dbReference>
<dbReference type="GO" id="GO:0008360">
    <property type="term" value="P:regulation of cell shape"/>
    <property type="evidence" value="ECO:0007669"/>
    <property type="project" value="UniProtKB-KW"/>
</dbReference>
<dbReference type="CDD" id="cd03785">
    <property type="entry name" value="GT28_MurG"/>
    <property type="match status" value="1"/>
</dbReference>
<dbReference type="FunFam" id="3.40.50.2000:FF:000016">
    <property type="entry name" value="UDP-N-acetylglucosamine--N-acetylmuramyl-(pentapeptide) pyrophosphoryl-undecaprenol N-acetylglucosamine transferase"/>
    <property type="match status" value="1"/>
</dbReference>
<dbReference type="FunFam" id="3.40.50.2000:FF:000018">
    <property type="entry name" value="UDP-N-acetylglucosamine--N-acetylmuramyl-(pentapeptide) pyrophosphoryl-undecaprenol N-acetylglucosamine transferase"/>
    <property type="match status" value="1"/>
</dbReference>
<dbReference type="Gene3D" id="3.40.50.2000">
    <property type="entry name" value="Glycogen Phosphorylase B"/>
    <property type="match status" value="2"/>
</dbReference>
<dbReference type="HAMAP" id="MF_00033">
    <property type="entry name" value="MurG"/>
    <property type="match status" value="1"/>
</dbReference>
<dbReference type="InterPro" id="IPR006009">
    <property type="entry name" value="GlcNAc_MurG"/>
</dbReference>
<dbReference type="InterPro" id="IPR007235">
    <property type="entry name" value="Glyco_trans_28_C"/>
</dbReference>
<dbReference type="InterPro" id="IPR004276">
    <property type="entry name" value="GlycoTrans_28_N"/>
</dbReference>
<dbReference type="NCBIfam" id="TIGR01133">
    <property type="entry name" value="murG"/>
    <property type="match status" value="1"/>
</dbReference>
<dbReference type="PANTHER" id="PTHR21015:SF22">
    <property type="entry name" value="GLYCOSYLTRANSFERASE"/>
    <property type="match status" value="1"/>
</dbReference>
<dbReference type="PANTHER" id="PTHR21015">
    <property type="entry name" value="UDP-N-ACETYLGLUCOSAMINE--N-ACETYLMURAMYL-(PENTAPEPTIDE) PYROPHOSPHORYL-UNDECAPRENOL N-ACETYLGLUCOSAMINE TRANSFERASE 1"/>
    <property type="match status" value="1"/>
</dbReference>
<dbReference type="Pfam" id="PF04101">
    <property type="entry name" value="Glyco_tran_28_C"/>
    <property type="match status" value="1"/>
</dbReference>
<dbReference type="Pfam" id="PF03033">
    <property type="entry name" value="Glyco_transf_28"/>
    <property type="match status" value="1"/>
</dbReference>
<dbReference type="SUPFAM" id="SSF53756">
    <property type="entry name" value="UDP-Glycosyltransferase/glycogen phosphorylase"/>
    <property type="match status" value="1"/>
</dbReference>
<sequence>MSGQGKRLMVMAGGTGGHVFPGLAVAHHLMAQGWQVRWLGTADRMEADLVPKHGIEIDFIRISGLRGKGIKALIAAPLRIFNAWRQARAIMKAYKPDVVLGMGGYVSGPGGLAAWSLGIPVVLHEQNGIAGLTNKWLAKIATKVMQAFPGAFPNAEVVGNPVRIDVLALPLPQQRLAGREGPVRVLVVGGSQGARILNQTMPQVAAKLGDSVTIWHQSGKGSQQSVEQAYAEAGQPQHKVTEFIDDMAAAYAWADVVVCRSGALTVSEIAAAGLPALFVPFQHKDRQQYWNALPLEKAGAAKIIEQPQLSVDAVANTLAGWSRETLLTMAERARAASIPDATERVANEVSRAARA</sequence>
<organism>
    <name type="scientific">Shigella boydii serotype 18 (strain CDC 3083-94 / BS512)</name>
    <dbReference type="NCBI Taxonomy" id="344609"/>
    <lineage>
        <taxon>Bacteria</taxon>
        <taxon>Pseudomonadati</taxon>
        <taxon>Pseudomonadota</taxon>
        <taxon>Gammaproteobacteria</taxon>
        <taxon>Enterobacterales</taxon>
        <taxon>Enterobacteriaceae</taxon>
        <taxon>Shigella</taxon>
    </lineage>
</organism>
<reference key="1">
    <citation type="submission" date="2008-05" db="EMBL/GenBank/DDBJ databases">
        <title>Complete sequence of Shigella boydii serotype 18 strain BS512.</title>
        <authorList>
            <person name="Rasko D.A."/>
            <person name="Rosovitz M."/>
            <person name="Maurelli A.T."/>
            <person name="Myers G."/>
            <person name="Seshadri R."/>
            <person name="Cer R."/>
            <person name="Jiang L."/>
            <person name="Ravel J."/>
            <person name="Sebastian Y."/>
        </authorList>
    </citation>
    <scope>NUCLEOTIDE SEQUENCE [LARGE SCALE GENOMIC DNA]</scope>
    <source>
        <strain>CDC 3083-94 / BS512</strain>
    </source>
</reference>
<gene>
    <name evidence="1" type="primary">murG</name>
    <name type="ordered locus">SbBS512_E0083</name>
</gene>
<keyword id="KW-0131">Cell cycle</keyword>
<keyword id="KW-0132">Cell division</keyword>
<keyword id="KW-0997">Cell inner membrane</keyword>
<keyword id="KW-1003">Cell membrane</keyword>
<keyword id="KW-0133">Cell shape</keyword>
<keyword id="KW-0961">Cell wall biogenesis/degradation</keyword>
<keyword id="KW-0328">Glycosyltransferase</keyword>
<keyword id="KW-0472">Membrane</keyword>
<keyword id="KW-0573">Peptidoglycan synthesis</keyword>
<keyword id="KW-1185">Reference proteome</keyword>
<keyword id="KW-0808">Transferase</keyword>
<proteinExistence type="inferred from homology"/>
<name>MURG_SHIB3</name>
<protein>
    <recommendedName>
        <fullName evidence="1">UDP-N-acetylglucosamine--N-acetylmuramyl-(pentapeptide) pyrophosphoryl-undecaprenol N-acetylglucosamine transferase</fullName>
        <ecNumber evidence="1">2.4.1.227</ecNumber>
    </recommendedName>
    <alternativeName>
        <fullName evidence="1">Undecaprenyl-PP-MurNAc-pentapeptide-UDPGlcNAc GlcNAc transferase</fullName>
    </alternativeName>
</protein>
<feature type="chain" id="PRO_1000090474" description="UDP-N-acetylglucosamine--N-acetylmuramyl-(pentapeptide) pyrophosphoryl-undecaprenol N-acetylglucosamine transferase">
    <location>
        <begin position="1"/>
        <end position="355"/>
    </location>
</feature>
<feature type="binding site" evidence="1">
    <location>
        <begin position="15"/>
        <end position="17"/>
    </location>
    <ligand>
        <name>UDP-N-acetyl-alpha-D-glucosamine</name>
        <dbReference type="ChEBI" id="CHEBI:57705"/>
    </ligand>
</feature>
<feature type="binding site" evidence="1">
    <location>
        <position position="127"/>
    </location>
    <ligand>
        <name>UDP-N-acetyl-alpha-D-glucosamine</name>
        <dbReference type="ChEBI" id="CHEBI:57705"/>
    </ligand>
</feature>
<feature type="binding site" evidence="1">
    <location>
        <position position="163"/>
    </location>
    <ligand>
        <name>UDP-N-acetyl-alpha-D-glucosamine</name>
        <dbReference type="ChEBI" id="CHEBI:57705"/>
    </ligand>
</feature>
<feature type="binding site" evidence="1">
    <location>
        <position position="191"/>
    </location>
    <ligand>
        <name>UDP-N-acetyl-alpha-D-glucosamine</name>
        <dbReference type="ChEBI" id="CHEBI:57705"/>
    </ligand>
</feature>
<feature type="binding site" evidence="1">
    <location>
        <position position="244"/>
    </location>
    <ligand>
        <name>UDP-N-acetyl-alpha-D-glucosamine</name>
        <dbReference type="ChEBI" id="CHEBI:57705"/>
    </ligand>
</feature>
<feature type="binding site" evidence="1">
    <location>
        <begin position="263"/>
        <end position="268"/>
    </location>
    <ligand>
        <name>UDP-N-acetyl-alpha-D-glucosamine</name>
        <dbReference type="ChEBI" id="CHEBI:57705"/>
    </ligand>
</feature>
<feature type="binding site" evidence="1">
    <location>
        <position position="288"/>
    </location>
    <ligand>
        <name>UDP-N-acetyl-alpha-D-glucosamine</name>
        <dbReference type="ChEBI" id="CHEBI:57705"/>
    </ligand>
</feature>
<evidence type="ECO:0000255" key="1">
    <source>
        <dbReference type="HAMAP-Rule" id="MF_00033"/>
    </source>
</evidence>
<accession>B2U295</accession>